<comment type="function">
    <text evidence="1">Allows the formation of correctly charged Asn-tRNA(Asn) or Gln-tRNA(Gln) through the transamidation of misacylated Asp-tRNA(Asn) or Glu-tRNA(Gln) in organisms which lack either or both of asparaginyl-tRNA or glutaminyl-tRNA synthetases. The reaction takes place in the presence of glutamine and ATP through an activated phospho-Asp-tRNA(Asn) or phospho-Glu-tRNA(Gln).</text>
</comment>
<comment type="catalytic activity">
    <reaction evidence="1">
        <text>L-glutamyl-tRNA(Gln) + L-glutamine + ATP + H2O = L-glutaminyl-tRNA(Gln) + L-glutamate + ADP + phosphate + H(+)</text>
        <dbReference type="Rhea" id="RHEA:17521"/>
        <dbReference type="Rhea" id="RHEA-COMP:9681"/>
        <dbReference type="Rhea" id="RHEA-COMP:9684"/>
        <dbReference type="ChEBI" id="CHEBI:15377"/>
        <dbReference type="ChEBI" id="CHEBI:15378"/>
        <dbReference type="ChEBI" id="CHEBI:29985"/>
        <dbReference type="ChEBI" id="CHEBI:30616"/>
        <dbReference type="ChEBI" id="CHEBI:43474"/>
        <dbReference type="ChEBI" id="CHEBI:58359"/>
        <dbReference type="ChEBI" id="CHEBI:78520"/>
        <dbReference type="ChEBI" id="CHEBI:78521"/>
        <dbReference type="ChEBI" id="CHEBI:456216"/>
    </reaction>
</comment>
<comment type="catalytic activity">
    <reaction evidence="1">
        <text>L-aspartyl-tRNA(Asn) + L-glutamine + ATP + H2O = L-asparaginyl-tRNA(Asn) + L-glutamate + ADP + phosphate + 2 H(+)</text>
        <dbReference type="Rhea" id="RHEA:14513"/>
        <dbReference type="Rhea" id="RHEA-COMP:9674"/>
        <dbReference type="Rhea" id="RHEA-COMP:9677"/>
        <dbReference type="ChEBI" id="CHEBI:15377"/>
        <dbReference type="ChEBI" id="CHEBI:15378"/>
        <dbReference type="ChEBI" id="CHEBI:29985"/>
        <dbReference type="ChEBI" id="CHEBI:30616"/>
        <dbReference type="ChEBI" id="CHEBI:43474"/>
        <dbReference type="ChEBI" id="CHEBI:58359"/>
        <dbReference type="ChEBI" id="CHEBI:78515"/>
        <dbReference type="ChEBI" id="CHEBI:78516"/>
        <dbReference type="ChEBI" id="CHEBI:456216"/>
    </reaction>
</comment>
<comment type="subunit">
    <text evidence="1">Heterotrimer of A, B and C subunits.</text>
</comment>
<comment type="similarity">
    <text evidence="1">Belongs to the GatB/GatE family. GatB subfamily.</text>
</comment>
<reference key="1">
    <citation type="submission" date="2007-06" db="EMBL/GenBank/DDBJ databases">
        <authorList>
            <person name="Dodson R.J."/>
            <person name="Harkins D."/>
            <person name="Paulsen I.T."/>
        </authorList>
    </citation>
    <scope>NUCLEOTIDE SEQUENCE [LARGE SCALE GENOMIC DNA]</scope>
    <source>
        <strain>DSM 24068 / PA7</strain>
    </source>
</reference>
<evidence type="ECO:0000255" key="1">
    <source>
        <dbReference type="HAMAP-Rule" id="MF_00121"/>
    </source>
</evidence>
<dbReference type="EC" id="6.3.5.-" evidence="1"/>
<dbReference type="EMBL" id="CP000744">
    <property type="protein sequence ID" value="ABR86836.1"/>
    <property type="molecule type" value="Genomic_DNA"/>
</dbReference>
<dbReference type="SMR" id="A6VBJ9"/>
<dbReference type="KEGG" id="pap:PSPA7_5098"/>
<dbReference type="HOGENOM" id="CLU_019240_0_0_6"/>
<dbReference type="Proteomes" id="UP000001582">
    <property type="component" value="Chromosome"/>
</dbReference>
<dbReference type="GO" id="GO:0050566">
    <property type="term" value="F:asparaginyl-tRNA synthase (glutamine-hydrolyzing) activity"/>
    <property type="evidence" value="ECO:0007669"/>
    <property type="project" value="RHEA"/>
</dbReference>
<dbReference type="GO" id="GO:0005524">
    <property type="term" value="F:ATP binding"/>
    <property type="evidence" value="ECO:0007669"/>
    <property type="project" value="UniProtKB-KW"/>
</dbReference>
<dbReference type="GO" id="GO:0050567">
    <property type="term" value="F:glutaminyl-tRNA synthase (glutamine-hydrolyzing) activity"/>
    <property type="evidence" value="ECO:0007669"/>
    <property type="project" value="UniProtKB-UniRule"/>
</dbReference>
<dbReference type="GO" id="GO:0070681">
    <property type="term" value="P:glutaminyl-tRNAGln biosynthesis via transamidation"/>
    <property type="evidence" value="ECO:0007669"/>
    <property type="project" value="TreeGrafter"/>
</dbReference>
<dbReference type="GO" id="GO:0006412">
    <property type="term" value="P:translation"/>
    <property type="evidence" value="ECO:0007669"/>
    <property type="project" value="UniProtKB-UniRule"/>
</dbReference>
<dbReference type="FunFam" id="1.10.10.410:FF:000001">
    <property type="entry name" value="Aspartyl/glutamyl-tRNA(Asn/Gln) amidotransferase subunit B"/>
    <property type="match status" value="1"/>
</dbReference>
<dbReference type="FunFam" id="1.10.150.380:FF:000001">
    <property type="entry name" value="Aspartyl/glutamyl-tRNA(Asn/Gln) amidotransferase subunit B"/>
    <property type="match status" value="1"/>
</dbReference>
<dbReference type="Gene3D" id="1.10.10.410">
    <property type="match status" value="1"/>
</dbReference>
<dbReference type="Gene3D" id="1.10.150.380">
    <property type="entry name" value="GatB domain, N-terminal subdomain"/>
    <property type="match status" value="1"/>
</dbReference>
<dbReference type="HAMAP" id="MF_00121">
    <property type="entry name" value="GatB"/>
    <property type="match status" value="1"/>
</dbReference>
<dbReference type="InterPro" id="IPR017959">
    <property type="entry name" value="Asn/Gln-tRNA_amidoTrfase_suB/E"/>
</dbReference>
<dbReference type="InterPro" id="IPR006075">
    <property type="entry name" value="Asn/Gln-tRNA_Trfase_suB/E_cat"/>
</dbReference>
<dbReference type="InterPro" id="IPR018027">
    <property type="entry name" value="Asn/Gln_amidotransferase"/>
</dbReference>
<dbReference type="InterPro" id="IPR003789">
    <property type="entry name" value="Asn/Gln_tRNA_amidoTrase-B-like"/>
</dbReference>
<dbReference type="InterPro" id="IPR004413">
    <property type="entry name" value="GatB"/>
</dbReference>
<dbReference type="InterPro" id="IPR042114">
    <property type="entry name" value="GatB_C_1"/>
</dbReference>
<dbReference type="InterPro" id="IPR023168">
    <property type="entry name" value="GatB_Yqey_C_2"/>
</dbReference>
<dbReference type="InterPro" id="IPR017958">
    <property type="entry name" value="Gln-tRNA_amidoTrfase_suB_CS"/>
</dbReference>
<dbReference type="InterPro" id="IPR014746">
    <property type="entry name" value="Gln_synth/guanido_kin_cat_dom"/>
</dbReference>
<dbReference type="NCBIfam" id="TIGR00133">
    <property type="entry name" value="gatB"/>
    <property type="match status" value="1"/>
</dbReference>
<dbReference type="NCBIfam" id="NF004012">
    <property type="entry name" value="PRK05477.1-2"/>
    <property type="match status" value="1"/>
</dbReference>
<dbReference type="NCBIfam" id="NF004014">
    <property type="entry name" value="PRK05477.1-4"/>
    <property type="match status" value="1"/>
</dbReference>
<dbReference type="NCBIfam" id="NF004015">
    <property type="entry name" value="PRK05477.1-5"/>
    <property type="match status" value="1"/>
</dbReference>
<dbReference type="PANTHER" id="PTHR11659">
    <property type="entry name" value="GLUTAMYL-TRNA GLN AMIDOTRANSFERASE SUBUNIT B MITOCHONDRIAL AND PROKARYOTIC PET112-RELATED"/>
    <property type="match status" value="1"/>
</dbReference>
<dbReference type="PANTHER" id="PTHR11659:SF0">
    <property type="entry name" value="GLUTAMYL-TRNA(GLN) AMIDOTRANSFERASE SUBUNIT B, MITOCHONDRIAL"/>
    <property type="match status" value="1"/>
</dbReference>
<dbReference type="Pfam" id="PF02934">
    <property type="entry name" value="GatB_N"/>
    <property type="match status" value="1"/>
</dbReference>
<dbReference type="Pfam" id="PF02637">
    <property type="entry name" value="GatB_Yqey"/>
    <property type="match status" value="1"/>
</dbReference>
<dbReference type="SMART" id="SM00845">
    <property type="entry name" value="GatB_Yqey"/>
    <property type="match status" value="1"/>
</dbReference>
<dbReference type="SUPFAM" id="SSF89095">
    <property type="entry name" value="GatB/YqeY motif"/>
    <property type="match status" value="1"/>
</dbReference>
<dbReference type="SUPFAM" id="SSF55931">
    <property type="entry name" value="Glutamine synthetase/guanido kinase"/>
    <property type="match status" value="1"/>
</dbReference>
<dbReference type="PROSITE" id="PS01234">
    <property type="entry name" value="GATB"/>
    <property type="match status" value="1"/>
</dbReference>
<feature type="chain" id="PRO_1000016020" description="Aspartyl/glutamyl-tRNA(Asn/Gln) amidotransferase subunit B">
    <location>
        <begin position="1"/>
        <end position="481"/>
    </location>
</feature>
<proteinExistence type="inferred from homology"/>
<name>GATB_PSEP7</name>
<protein>
    <recommendedName>
        <fullName evidence="1">Aspartyl/glutamyl-tRNA(Asn/Gln) amidotransferase subunit B</fullName>
        <shortName evidence="1">Asp/Glu-ADT subunit B</shortName>
        <ecNumber evidence="1">6.3.5.-</ecNumber>
    </recommendedName>
</protein>
<keyword id="KW-0067">ATP-binding</keyword>
<keyword id="KW-0436">Ligase</keyword>
<keyword id="KW-0547">Nucleotide-binding</keyword>
<keyword id="KW-0648">Protein biosynthesis</keyword>
<sequence length="481" mass="53236">MQWETVIGLEIHAQLATQSKIFSGSPTAFGAAPNTQASLVDLAMPGTLPVLNEEAVRMACLFGLAIDARIDRQNVFARKNYFYPDLPKGYQTSQMDHPIVGKGHLDITLEDGTTRRIGITRAHLEEDAGKSLHEDFQGMSGIDLNRAGTPLLEIVSEPDIRSAKEAVAYVKAIHALVRYLGICDGNMAEGSLRCDCNVSVRPKGQAEFGTRAEIKNVNSFRFIEKAINHEIQRQIELIEDGGKVVQETRLYDPNKDETRSMRGKEEANDYRYFPCPDLLPVIIEPEYLAKLREQLPELPVQKRERFESQYGLSAYDASVLSASREMADYFEKVQEICGDAKLAANWVMVELGSLLNKDGLEIEQSPVSAEQLGGMILRIKDNTISGKIAKMVFEAMANGEGSADQIIEAKGLKQVTDSGAIEKMLDEVLTANAEQVEQYRAADEAKRGKMFGFFVGQAMKASKGKANPQQVNELLKKKLEA</sequence>
<organism>
    <name type="scientific">Pseudomonas paraeruginosa (strain DSM 24068 / PA7)</name>
    <name type="common">Pseudomonas aeruginosa (strain PA7)</name>
    <dbReference type="NCBI Taxonomy" id="381754"/>
    <lineage>
        <taxon>Bacteria</taxon>
        <taxon>Pseudomonadati</taxon>
        <taxon>Pseudomonadota</taxon>
        <taxon>Gammaproteobacteria</taxon>
        <taxon>Pseudomonadales</taxon>
        <taxon>Pseudomonadaceae</taxon>
        <taxon>Pseudomonas</taxon>
        <taxon>Pseudomonas paraeruginosa</taxon>
    </lineage>
</organism>
<accession>A6VBJ9</accession>
<gene>
    <name evidence="1" type="primary">gatB</name>
    <name type="ordered locus">PSPA7_5098</name>
</gene>